<accession>P03092</accession>
<organism>
    <name type="scientific">Hamster polyomavirus</name>
    <name type="common">HaPyV</name>
    <name type="synonym">Mesocricetus auratus polyomavirus 1</name>
    <dbReference type="NCBI Taxonomy" id="1891729"/>
    <lineage>
        <taxon>Viruses</taxon>
        <taxon>Monodnaviria</taxon>
        <taxon>Shotokuvirae</taxon>
        <taxon>Cossaviricota</taxon>
        <taxon>Papovaviricetes</taxon>
        <taxon>Sepolyvirales</taxon>
        <taxon>Polyomaviridae</taxon>
        <taxon>Alphapolyomavirus</taxon>
    </lineage>
</organism>
<feature type="chain" id="PRO_0000115020" description="Major capsid protein VP1">
    <location>
        <begin position="1"/>
        <end position="372"/>
    </location>
</feature>
<feature type="region of interest" description="C-terminal arm" evidence="2">
    <location>
        <begin position="307"/>
        <end position="372"/>
    </location>
</feature>
<feature type="region of interest" description="Disordered" evidence="3">
    <location>
        <begin position="347"/>
        <end position="372"/>
    </location>
</feature>
<feature type="modified residue" description="Phosphothreonine; by host" evidence="1">
    <location>
        <position position="343"/>
    </location>
</feature>
<feature type="disulfide bond" description="Interchain (with C-102)" evidence="1">
    <location>
        <position position="102"/>
    </location>
</feature>
<protein>
    <recommendedName>
        <fullName>Major capsid protein VP1</fullName>
    </recommendedName>
    <alternativeName>
        <fullName>Major structural protein VP1</fullName>
    </alternativeName>
</protein>
<name>VP1_POVHA</name>
<keyword id="KW-0024">Alternative initiation</keyword>
<keyword id="KW-0025">Alternative splicing</keyword>
<keyword id="KW-0167">Capsid protein</keyword>
<keyword id="KW-1015">Disulfide bond</keyword>
<keyword id="KW-1048">Host nucleus</keyword>
<keyword id="KW-0945">Host-virus interaction</keyword>
<keyword id="KW-0426">Late protein</keyword>
<keyword id="KW-0597">Phosphoprotein</keyword>
<keyword id="KW-1145">T=7 icosahedral capsid protein</keyword>
<keyword id="KW-1161">Viral attachment to host cell</keyword>
<keyword id="KW-1162">Viral penetration into host cytoplasm</keyword>
<keyword id="KW-0946">Virion</keyword>
<keyword id="KW-1164">Virus endocytosis by host</keyword>
<keyword id="KW-1160">Virus entry into host cell</keyword>
<evidence type="ECO:0000250" key="1"/>
<evidence type="ECO:0000250" key="2">
    <source>
        <dbReference type="UniProtKB" id="P03087"/>
    </source>
</evidence>
<evidence type="ECO:0000256" key="3">
    <source>
        <dbReference type="SAM" id="MobiDB-lite"/>
    </source>
</evidence>
<evidence type="ECO:0000305" key="4"/>
<dbReference type="EMBL" id="X02449">
    <property type="status" value="NOT_ANNOTATED_CDS"/>
    <property type="molecule type" value="Genomic_DNA"/>
</dbReference>
<dbReference type="PIR" id="A03630">
    <property type="entry name" value="VVVP1H"/>
</dbReference>
<dbReference type="SMR" id="P03092"/>
<dbReference type="GO" id="GO:0042025">
    <property type="term" value="C:host cell nucleus"/>
    <property type="evidence" value="ECO:0007669"/>
    <property type="project" value="UniProtKB-SubCell"/>
</dbReference>
<dbReference type="GO" id="GO:0039620">
    <property type="term" value="C:T=7 icosahedral viral capsid"/>
    <property type="evidence" value="ECO:0007669"/>
    <property type="project" value="UniProtKB-KW"/>
</dbReference>
<dbReference type="GO" id="GO:0005198">
    <property type="term" value="F:structural molecule activity"/>
    <property type="evidence" value="ECO:0007669"/>
    <property type="project" value="InterPro"/>
</dbReference>
<dbReference type="GO" id="GO:0075509">
    <property type="term" value="P:endocytosis involved in viral entry into host cell"/>
    <property type="evidence" value="ECO:0007669"/>
    <property type="project" value="UniProtKB-KW"/>
</dbReference>
<dbReference type="GO" id="GO:0019062">
    <property type="term" value="P:virion attachment to host cell"/>
    <property type="evidence" value="ECO:0007669"/>
    <property type="project" value="UniProtKB-KW"/>
</dbReference>
<dbReference type="Gene3D" id="2.60.175.10">
    <property type="entry name" value="Capsid protein VP1,Polyomavirus"/>
    <property type="match status" value="1"/>
</dbReference>
<dbReference type="InterPro" id="IPR000662">
    <property type="entry name" value="Capsid_VP1_Polyomavir"/>
</dbReference>
<dbReference type="InterPro" id="IPR011222">
    <property type="entry name" value="dsDNA_vir_gr_I_capsid"/>
</dbReference>
<dbReference type="InterPro" id="IPR036931">
    <property type="entry name" value="Polyomavir_VP1_sf"/>
</dbReference>
<dbReference type="Pfam" id="PF00718">
    <property type="entry name" value="Polyoma_coat"/>
    <property type="match status" value="1"/>
</dbReference>
<dbReference type="PIRSF" id="PIRSF003376">
    <property type="entry name" value="Capsid_VP1_Polyomavir"/>
    <property type="match status" value="1"/>
</dbReference>
<dbReference type="SUPFAM" id="SSF88648">
    <property type="entry name" value="Group I dsDNA viruses"/>
    <property type="match status" value="1"/>
</dbReference>
<sequence length="372" mass="40815">MCKPLWKPCPKPANVPKLIMRGGVGVLDLVTGEDSITQIEAYLNPRMGQNKPGTGTDGQYYGFSQSIKVNSSLTADEVKANQLPYYSMAKIQLPTLNEDLTCDTLQMWEAVSVKTEVVGVGSLLNVHGYGSRSETKDIGISKPVEGTTYHMFAVGGEPLDLQGLVQNYNANYEAAIVSIKTVTGKAMTSTNQVLDPTAKAKLDKDGRYPIEIWGPDPSKNENSRYYGNFTGGTGTPPVMQFTNTLTTVLLDENGVGPLCKGDGLYLSAADVMGWYIEYNSAGWHWRGLPRYFNVTLRKRWVKNPYPVTSLLASLYNNMLPTIEGQPMEGEAAQVEEVRIYEGTEAVPGDPDVNRFIDKYGQQHTKPPAKPAN</sequence>
<comment type="function">
    <text evidence="2">Forms an icosahedral capsid with a T=7 symmetry and a 40 nm diameter. The capsid is composed of 72 pentamers linked to each other by disulfide bonds and associated with VP2 or VP3 proteins. Interacts with sialic acids on the cell surface to provide virion attachment to target cell. Once attached, the virion is internalized by endocytosis and traffics to the endoplasmic reticulum. Inside the endoplasmic reticulum, the protein folding machinery isomerizes VP1 interpentamer disulfide bonds, thereby triggering initial uncoating. Next, the virion uses the endoplasmic reticulum-associated degradation machinery to probably translocate in the cytosol before reaching the nucleus. Nuclear entry of the viral DNA involves the selective exposure and importin recognition of VP2/Vp3 nuclear localization signal. In late phase of infection, neo-synthesized VP1 encapsulates replicated genomic DNA in the nucleus, and participates in rearranging nucleosomes around the viral DNA.</text>
</comment>
<comment type="subunit">
    <text evidence="2">Homomultimer; disulfide-linked. The virus capsid is composed of 72 icosahedral units, each one composed of five disulfide-linked copies of VP1. Interacts with minor capsid proteins VP2 and VP3.</text>
</comment>
<comment type="subcellular location">
    <subcellularLocation>
        <location>Virion</location>
    </subcellularLocation>
    <subcellularLocation>
        <location evidence="2">Host nucleus</location>
    </subcellularLocation>
</comment>
<comment type="alternative products">
    <event type="alternative splicing"/>
    <event type="alternative initiation"/>
    <isoform>
        <id>P03092-1</id>
        <name>VP1</name>
        <sequence type="displayed"/>
    </isoform>
    <isoform>
        <id>P03098-1</id>
        <name>VP2</name>
        <name>Minor capsid protein VP2</name>
        <sequence type="external"/>
    </isoform>
    <isoform>
        <id>P03098-2</id>
        <name>VP3</name>
        <name>Minor capsid protein VP3</name>
        <sequence type="external"/>
    </isoform>
</comment>
<comment type="domain">
    <text evidence="2">The intrinsically disordered C-terminal arm interacts with neighboring pentamers. The unstructured nature of this region allows to make different interactions depending on the structural context: pentamers present at the 12 icosahedral fivefold axes bind five pentamers, whereas pentamers present at the 60 icosahedral six-fold axes interact with six pentamers.</text>
</comment>
<comment type="miscellaneous">
    <molecule>Isoform VP1</molecule>
    <text>Produced by alternative splicing of the late mRNA.</text>
</comment>
<comment type="similarity">
    <text evidence="4">Belongs to the polyomaviruses coat protein VP1 family.</text>
</comment>
<organismHost>
    <name type="scientific">Mesocricetus auratus</name>
    <name type="common">Golden hamster</name>
    <dbReference type="NCBI Taxonomy" id="10036"/>
</organismHost>
<proteinExistence type="inferred from homology"/>
<reference key="1">
    <citation type="journal article" date="1985" name="EMBO J.">
        <title>A new member of the polyomavirus family: the hamster papovavirus. Complete nucleotide sequence and transformation properties.</title>
        <authorList>
            <person name="Delmas V."/>
            <person name="Bastien C."/>
            <person name="Scherneck S."/>
            <person name="Feunteun J."/>
        </authorList>
    </citation>
    <scope>NUCLEOTIDE SEQUENCE [GENOMIC DNA]</scope>
</reference>
<reference key="2">
    <citation type="journal article" date="2009" name="Virology">
        <title>The Polyomaviridae: Contributions of virus structure to our understanding of virus receptors and infectious entry.</title>
        <authorList>
            <person name="Neu U."/>
            <person name="Stehle T."/>
            <person name="Atwood W.J."/>
        </authorList>
    </citation>
    <scope>REVIEW</scope>
</reference>